<feature type="chain" id="PRO_0000386686" description="Ribosomal RNA small subunit methyltransferase H">
    <location>
        <begin position="1"/>
        <end position="311"/>
    </location>
</feature>
<feature type="binding site" evidence="1">
    <location>
        <begin position="41"/>
        <end position="43"/>
    </location>
    <ligand>
        <name>S-adenosyl-L-methionine</name>
        <dbReference type="ChEBI" id="CHEBI:59789"/>
    </ligand>
</feature>
<feature type="binding site" evidence="1">
    <location>
        <position position="61"/>
    </location>
    <ligand>
        <name>S-adenosyl-L-methionine</name>
        <dbReference type="ChEBI" id="CHEBI:59789"/>
    </ligand>
</feature>
<feature type="binding site" evidence="1">
    <location>
        <position position="85"/>
    </location>
    <ligand>
        <name>S-adenosyl-L-methionine</name>
        <dbReference type="ChEBI" id="CHEBI:59789"/>
    </ligand>
</feature>
<feature type="binding site" evidence="1">
    <location>
        <position position="102"/>
    </location>
    <ligand>
        <name>S-adenosyl-L-methionine</name>
        <dbReference type="ChEBI" id="CHEBI:59789"/>
    </ligand>
</feature>
<feature type="binding site" evidence="1">
    <location>
        <position position="109"/>
    </location>
    <ligand>
        <name>S-adenosyl-L-methionine</name>
        <dbReference type="ChEBI" id="CHEBI:59789"/>
    </ligand>
</feature>
<dbReference type="EC" id="2.1.1.199" evidence="1"/>
<dbReference type="EMBL" id="CP000512">
    <property type="protein sequence ID" value="ABM31411.1"/>
    <property type="molecule type" value="Genomic_DNA"/>
</dbReference>
<dbReference type="RefSeq" id="WP_011793971.1">
    <property type="nucleotide sequence ID" value="NC_008752.1"/>
</dbReference>
<dbReference type="SMR" id="A1TKC3"/>
<dbReference type="STRING" id="397945.Aave_0813"/>
<dbReference type="GeneID" id="79790469"/>
<dbReference type="KEGG" id="aav:Aave_0813"/>
<dbReference type="eggNOG" id="COG0275">
    <property type="taxonomic scope" value="Bacteria"/>
</dbReference>
<dbReference type="HOGENOM" id="CLU_038422_2_0_4"/>
<dbReference type="OrthoDB" id="9806637at2"/>
<dbReference type="Proteomes" id="UP000002596">
    <property type="component" value="Chromosome"/>
</dbReference>
<dbReference type="GO" id="GO:0005737">
    <property type="term" value="C:cytoplasm"/>
    <property type="evidence" value="ECO:0007669"/>
    <property type="project" value="UniProtKB-SubCell"/>
</dbReference>
<dbReference type="GO" id="GO:0071424">
    <property type="term" value="F:rRNA (cytosine-N4-)-methyltransferase activity"/>
    <property type="evidence" value="ECO:0007669"/>
    <property type="project" value="UniProtKB-UniRule"/>
</dbReference>
<dbReference type="GO" id="GO:0070475">
    <property type="term" value="P:rRNA base methylation"/>
    <property type="evidence" value="ECO:0007669"/>
    <property type="project" value="UniProtKB-UniRule"/>
</dbReference>
<dbReference type="Gene3D" id="1.10.150.170">
    <property type="entry name" value="Putative methyltransferase TM0872, insert domain"/>
    <property type="match status" value="1"/>
</dbReference>
<dbReference type="Gene3D" id="3.40.50.150">
    <property type="entry name" value="Vaccinia Virus protein VP39"/>
    <property type="match status" value="1"/>
</dbReference>
<dbReference type="HAMAP" id="MF_01007">
    <property type="entry name" value="16SrRNA_methyltr_H"/>
    <property type="match status" value="1"/>
</dbReference>
<dbReference type="InterPro" id="IPR002903">
    <property type="entry name" value="RsmH"/>
</dbReference>
<dbReference type="InterPro" id="IPR023397">
    <property type="entry name" value="SAM-dep_MeTrfase_MraW_recog"/>
</dbReference>
<dbReference type="InterPro" id="IPR029063">
    <property type="entry name" value="SAM-dependent_MTases_sf"/>
</dbReference>
<dbReference type="NCBIfam" id="TIGR00006">
    <property type="entry name" value="16S rRNA (cytosine(1402)-N(4))-methyltransferase RsmH"/>
    <property type="match status" value="1"/>
</dbReference>
<dbReference type="PANTHER" id="PTHR11265:SF0">
    <property type="entry name" value="12S RRNA N4-METHYLCYTIDINE METHYLTRANSFERASE"/>
    <property type="match status" value="1"/>
</dbReference>
<dbReference type="PANTHER" id="PTHR11265">
    <property type="entry name" value="S-ADENOSYL-METHYLTRANSFERASE MRAW"/>
    <property type="match status" value="1"/>
</dbReference>
<dbReference type="Pfam" id="PF01795">
    <property type="entry name" value="Methyltransf_5"/>
    <property type="match status" value="1"/>
</dbReference>
<dbReference type="PIRSF" id="PIRSF004486">
    <property type="entry name" value="MraW"/>
    <property type="match status" value="1"/>
</dbReference>
<dbReference type="SUPFAM" id="SSF81799">
    <property type="entry name" value="Putative methyltransferase TM0872, insert domain"/>
    <property type="match status" value="1"/>
</dbReference>
<dbReference type="SUPFAM" id="SSF53335">
    <property type="entry name" value="S-adenosyl-L-methionine-dependent methyltransferases"/>
    <property type="match status" value="1"/>
</dbReference>
<organism>
    <name type="scientific">Paracidovorax citrulli (strain AAC00-1)</name>
    <name type="common">Acidovorax citrulli</name>
    <dbReference type="NCBI Taxonomy" id="397945"/>
    <lineage>
        <taxon>Bacteria</taxon>
        <taxon>Pseudomonadati</taxon>
        <taxon>Pseudomonadota</taxon>
        <taxon>Betaproteobacteria</taxon>
        <taxon>Burkholderiales</taxon>
        <taxon>Comamonadaceae</taxon>
        <taxon>Paracidovorax</taxon>
    </lineage>
</organism>
<sequence length="311" mass="33854">MADTTTLLHTTVLLDEAVDALLGGAGPAPAGVWIDATFGRGGHSRRILERLGPDGRLVAFDKDPEAIHEAARITDARFSIRHEGFRHLADLPERSAAGILMDLGVSSPQIDSPERGFSFRFDGPLDMRMDTTRGESVADWLATADVGQIAEVIREYGEERFAGPIAKAIAARRAERGPLRTTSELAQLVAGAVKTREAGQNPATRTFQALRIFINAELEELQAALEASLRVLAPGGRLAVISFHSLEDRIVKQFIAQHSREVYDRRAPFAAPQPMRLKALDRIKPGACEVDANPRARSAVMRVAERTEVPA</sequence>
<accession>A1TKC3</accession>
<protein>
    <recommendedName>
        <fullName evidence="1">Ribosomal RNA small subunit methyltransferase H</fullName>
        <ecNumber evidence="1">2.1.1.199</ecNumber>
    </recommendedName>
    <alternativeName>
        <fullName evidence="1">16S rRNA m(4)C1402 methyltransferase</fullName>
    </alternativeName>
    <alternativeName>
        <fullName evidence="1">rRNA (cytosine-N(4)-)-methyltransferase RsmH</fullName>
    </alternativeName>
</protein>
<keyword id="KW-0963">Cytoplasm</keyword>
<keyword id="KW-0489">Methyltransferase</keyword>
<keyword id="KW-0698">rRNA processing</keyword>
<keyword id="KW-0949">S-adenosyl-L-methionine</keyword>
<keyword id="KW-0808">Transferase</keyword>
<proteinExistence type="inferred from homology"/>
<name>RSMH_PARC0</name>
<comment type="function">
    <text evidence="1">Specifically methylates the N4 position of cytidine in position 1402 (C1402) of 16S rRNA.</text>
</comment>
<comment type="catalytic activity">
    <reaction evidence="1">
        <text>cytidine(1402) in 16S rRNA + S-adenosyl-L-methionine = N(4)-methylcytidine(1402) in 16S rRNA + S-adenosyl-L-homocysteine + H(+)</text>
        <dbReference type="Rhea" id="RHEA:42928"/>
        <dbReference type="Rhea" id="RHEA-COMP:10286"/>
        <dbReference type="Rhea" id="RHEA-COMP:10287"/>
        <dbReference type="ChEBI" id="CHEBI:15378"/>
        <dbReference type="ChEBI" id="CHEBI:57856"/>
        <dbReference type="ChEBI" id="CHEBI:59789"/>
        <dbReference type="ChEBI" id="CHEBI:74506"/>
        <dbReference type="ChEBI" id="CHEBI:82748"/>
        <dbReference type="EC" id="2.1.1.199"/>
    </reaction>
</comment>
<comment type="subcellular location">
    <subcellularLocation>
        <location evidence="1">Cytoplasm</location>
    </subcellularLocation>
</comment>
<comment type="similarity">
    <text evidence="1">Belongs to the methyltransferase superfamily. RsmH family.</text>
</comment>
<evidence type="ECO:0000255" key="1">
    <source>
        <dbReference type="HAMAP-Rule" id="MF_01007"/>
    </source>
</evidence>
<reference key="1">
    <citation type="submission" date="2006-12" db="EMBL/GenBank/DDBJ databases">
        <title>Complete sequence of Acidovorax avenae subsp. citrulli AAC00-1.</title>
        <authorList>
            <person name="Copeland A."/>
            <person name="Lucas S."/>
            <person name="Lapidus A."/>
            <person name="Barry K."/>
            <person name="Detter J.C."/>
            <person name="Glavina del Rio T."/>
            <person name="Dalin E."/>
            <person name="Tice H."/>
            <person name="Pitluck S."/>
            <person name="Kiss H."/>
            <person name="Brettin T."/>
            <person name="Bruce D."/>
            <person name="Han C."/>
            <person name="Tapia R."/>
            <person name="Gilna P."/>
            <person name="Schmutz J."/>
            <person name="Larimer F."/>
            <person name="Land M."/>
            <person name="Hauser L."/>
            <person name="Kyrpides N."/>
            <person name="Kim E."/>
            <person name="Stahl D."/>
            <person name="Richardson P."/>
        </authorList>
    </citation>
    <scope>NUCLEOTIDE SEQUENCE [LARGE SCALE GENOMIC DNA]</scope>
    <source>
        <strain>AAC00-1</strain>
    </source>
</reference>
<gene>
    <name evidence="1" type="primary">rsmH</name>
    <name type="synonym">mraW</name>
    <name type="ordered locus">Aave_0813</name>
</gene>